<organism>
    <name type="scientific">Haemophilus influenzae (strain ATCC 51907 / DSM 11121 / KW20 / Rd)</name>
    <dbReference type="NCBI Taxonomy" id="71421"/>
    <lineage>
        <taxon>Bacteria</taxon>
        <taxon>Pseudomonadati</taxon>
        <taxon>Pseudomonadota</taxon>
        <taxon>Gammaproteobacteria</taxon>
        <taxon>Pasteurellales</taxon>
        <taxon>Pasteurellaceae</taxon>
        <taxon>Haemophilus</taxon>
    </lineage>
</organism>
<protein>
    <recommendedName>
        <fullName>Uncharacterized protein HI_1710</fullName>
    </recommendedName>
</protein>
<dbReference type="EMBL" id="L42023">
    <property type="protein sequence ID" value="AAC23363.1"/>
    <property type="molecule type" value="Genomic_DNA"/>
</dbReference>
<dbReference type="PIR" id="G64040">
    <property type="entry name" value="G64040"/>
</dbReference>
<dbReference type="SMR" id="P44294"/>
<dbReference type="STRING" id="71421.HI_1710"/>
<dbReference type="EnsemblBacteria" id="AAC23363">
    <property type="protein sequence ID" value="AAC23363"/>
    <property type="gene ID" value="HI_1710"/>
</dbReference>
<dbReference type="KEGG" id="hin:HI_1710"/>
<dbReference type="HOGENOM" id="CLU_217214_0_0_6"/>
<dbReference type="Proteomes" id="UP000000579">
    <property type="component" value="Chromosome"/>
</dbReference>
<reference key="1">
    <citation type="journal article" date="1995" name="Science">
        <title>Whole-genome random sequencing and assembly of Haemophilus influenzae Rd.</title>
        <authorList>
            <person name="Fleischmann R.D."/>
            <person name="Adams M.D."/>
            <person name="White O."/>
            <person name="Clayton R.A."/>
            <person name="Kirkness E.F."/>
            <person name="Kerlavage A.R."/>
            <person name="Bult C.J."/>
            <person name="Tomb J.-F."/>
            <person name="Dougherty B.A."/>
            <person name="Merrick J.M."/>
            <person name="McKenney K."/>
            <person name="Sutton G.G."/>
            <person name="FitzHugh W."/>
            <person name="Fields C.A."/>
            <person name="Gocayne J.D."/>
            <person name="Scott J.D."/>
            <person name="Shirley R."/>
            <person name="Liu L.-I."/>
            <person name="Glodek A."/>
            <person name="Kelley J.M."/>
            <person name="Weidman J.F."/>
            <person name="Phillips C.A."/>
            <person name="Spriggs T."/>
            <person name="Hedblom E."/>
            <person name="Cotton M.D."/>
            <person name="Utterback T.R."/>
            <person name="Hanna M.C."/>
            <person name="Nguyen D.T."/>
            <person name="Saudek D.M."/>
            <person name="Brandon R.C."/>
            <person name="Fine L.D."/>
            <person name="Fritchman J.L."/>
            <person name="Fuhrmann J.L."/>
            <person name="Geoghagen N.S.M."/>
            <person name="Gnehm C.L."/>
            <person name="McDonald L.A."/>
            <person name="Small K.V."/>
            <person name="Fraser C.M."/>
            <person name="Smith H.O."/>
            <person name="Venter J.C."/>
        </authorList>
    </citation>
    <scope>NUCLEOTIDE SEQUENCE [LARGE SCALE GENOMIC DNA]</scope>
    <source>
        <strain>ATCC 51907 / DSM 11121 / KW20 / Rd</strain>
    </source>
</reference>
<sequence>MKGQLNLRSETTALSLKQGEVAFITAGAAYEVEGLIEGYAVVAKLP</sequence>
<name>Y1710_HAEIN</name>
<accession>P44294</accession>
<proteinExistence type="predicted"/>
<keyword id="KW-1185">Reference proteome</keyword>
<feature type="chain" id="PRO_0000078107" description="Uncharacterized protein HI_1710">
    <location>
        <begin position="1"/>
        <end position="46"/>
    </location>
</feature>
<gene>
    <name type="ordered locus">HI_1710</name>
</gene>